<comment type="function">
    <text evidence="7 11 12 14 15 16 18 19 21 23">Involved in oxidative stress-mediated signaling cascade (such as ozone). Involved in the innate immune MAP kinase signaling cascade (MEKK1, MKK4/MKK5 and MPK3/MPK6) downstream of bacterial flagellin receptor FLS2. May be involved in hypersensitive response (HR)-mediated signaling cascade by modulating LIP5 phosphorylation and subsequent multivesicular bodies (MVBs) trafficking. May phosphorylate regulators of WRKY transcription factors. Mediates the phosphorylation of VIP1 and subsequent stress genes transcription in response to Agrobacterium. MKK9-MPK3/MPK6 module phosphorylates and activates EIN3, leading to the promotion of EIN3-mediated transcription in ethylene signaling. MPK3/MPK6 cascade regulates camalexin synthesis through transcriptional regulation of the biosynthetic genes after pathogen infection. YDA-MKK4/MKK5-MPK3/MPK6 module regulates stomatal cell fate before the guard mother cell (GMC) is specified. When activated, reinforces the feedback loop by phosphorylating BASL, and inhibits stomatal fate by phosphorylating SPCH (PubMed:25843888). This MAPK cascade also functions downstream of the ER receptor in regulating coordinated local cell proliferation, which shapes the morphology of plant organs.</text>
</comment>
<comment type="catalytic activity">
    <reaction evidence="8 10">
        <text>L-seryl-[protein] + ATP = O-phospho-L-seryl-[protein] + ADP + H(+)</text>
        <dbReference type="Rhea" id="RHEA:17989"/>
        <dbReference type="Rhea" id="RHEA-COMP:9863"/>
        <dbReference type="Rhea" id="RHEA-COMP:11604"/>
        <dbReference type="ChEBI" id="CHEBI:15378"/>
        <dbReference type="ChEBI" id="CHEBI:29999"/>
        <dbReference type="ChEBI" id="CHEBI:30616"/>
        <dbReference type="ChEBI" id="CHEBI:83421"/>
        <dbReference type="ChEBI" id="CHEBI:456216"/>
        <dbReference type="EC" id="2.7.11.24"/>
    </reaction>
</comment>
<comment type="catalytic activity">
    <reaction evidence="8 10">
        <text>L-threonyl-[protein] + ATP = O-phospho-L-threonyl-[protein] + ADP + H(+)</text>
        <dbReference type="Rhea" id="RHEA:46608"/>
        <dbReference type="Rhea" id="RHEA-COMP:11060"/>
        <dbReference type="Rhea" id="RHEA-COMP:11605"/>
        <dbReference type="ChEBI" id="CHEBI:15378"/>
        <dbReference type="ChEBI" id="CHEBI:30013"/>
        <dbReference type="ChEBI" id="CHEBI:30616"/>
        <dbReference type="ChEBI" id="CHEBI:61977"/>
        <dbReference type="ChEBI" id="CHEBI:456216"/>
        <dbReference type="EC" id="2.7.11.24"/>
    </reaction>
</comment>
<comment type="activity regulation">
    <text evidence="5 7 8 10 13 14 15 18">Activated by threonine and tyrosine phosphorylation. Activated by MAP kinase kinases MKK4, MKK5, MKK7 and MKK9. Activated in response to hydrogen peroxide, ozone, salt stress and flagellin bacterial elicitor. Triggered by Agrobacterium upon T-DNA transfer. Repressed by DSPTP1B/MKP2-mediated dephosphorylation.</text>
</comment>
<comment type="subunit">
    <text evidence="9 14 17 20 21 22 25 28">Interacts with DSPTP1B/MKP2, NDPK2 and VIP1. The interaction with DSPTP1B/MKP2 is repressed by fungal elicitation (PubMed:12506203, PubMed:17947581, PubMed:20626661). Binds to LIP5 (PubMed:25010425). Interacts with VQ4 (PubMed:24750137). Interacts with RACK1A, RACK1B and RACK1C (PubMed:25731164). Interacts with FLZ9 (Ref.28). Interacts with MKK5 (PubMed:27913741).</text>
</comment>
<comment type="interaction">
    <interactant intactId="EBI-349526">
        <id>Q39023</id>
    </interactant>
    <interactant intactId="EBI-4436376">
        <id>O80719</id>
        <label>At2g47060</label>
    </interactant>
    <organismsDiffer>false</organismsDiffer>
    <experiments>2</experiments>
</comment>
<comment type="interaction">
    <interactant intactId="EBI-349526">
        <id>Q39023</id>
    </interactant>
    <interactant intactId="EBI-25512239">
        <id>Q9ZR37</id>
        <label>DSPTP1</label>
    </interactant>
    <organismsDiffer>false</organismsDiffer>
    <experiments>3</experiments>
</comment>
<comment type="interaction">
    <interactant intactId="EBI-349526">
        <id>Q39023</id>
    </interactant>
    <interactant intactId="EBI-2295525">
        <id>O24408</id>
        <label>IAA18</label>
    </interactant>
    <organismsDiffer>false</organismsDiffer>
    <experiments>3</experiments>
</comment>
<comment type="interaction">
    <interactant intactId="EBI-349526">
        <id>Q39023</id>
    </interactant>
    <interactant intactId="EBI-4443654">
        <id>Q8LGS1</id>
        <label>MARD1</label>
    </interactant>
    <organismsDiffer>false</organismsDiffer>
    <experiments>4</experiments>
</comment>
<comment type="interaction">
    <interactant intactId="EBI-349526">
        <id>Q39023</id>
    </interactant>
    <interactant intactId="EBI-2358409">
        <id>O80397</id>
        <label>MKK4</label>
    </interactant>
    <organismsDiffer>false</organismsDiffer>
    <experiments>9</experiments>
</comment>
<comment type="interaction">
    <interactant intactId="EBI-349526">
        <id>Q39023</id>
    </interactant>
    <interactant intactId="EBI-349517">
        <id>O64903</id>
        <label>NDPK2</label>
    </interactant>
    <organismsDiffer>false</organismsDiffer>
    <experiments>4</experiments>
</comment>
<comment type="interaction">
    <interactant intactId="EBI-349526">
        <id>Q39023</id>
    </interactant>
    <interactant intactId="EBI-15192297">
        <id>Q9LQF0</id>
        <label>TCP23</label>
    </interactant>
    <organismsDiffer>false</organismsDiffer>
    <experiments>3</experiments>
</comment>
<comment type="subcellular location">
    <subcellularLocation>
        <location evidence="10">Cytoplasm</location>
    </subcellularLocation>
    <subcellularLocation>
        <location evidence="10 26">Nucleus</location>
    </subcellularLocation>
    <subcellularLocation>
        <location evidence="23">Cytoplasm</location>
        <location evidence="23">Cell cortex</location>
    </subcellularLocation>
    <text evidence="23 30">Translocated into the nucleus in response to phosphorylation (Probable). Recruited by BASL at the cell cortex in a polarized manner (PubMed:25843888).</text>
</comment>
<comment type="developmental stage">
    <text evidence="24">Copolarizes with BASL, YDA and MPK6 in stomatal asymmetric cell division (ACD) cells.</text>
</comment>
<comment type="induction">
    <text evidence="10 27">By touch, cold, salinity stress and ozone.</text>
</comment>
<comment type="domain">
    <text>The TXY motif contains the threonine and tyrosine residues whose phosphorylation activates the MAP kinases.</text>
</comment>
<comment type="PTM">
    <text evidence="1 6">Dually phosphorylated on Thr-196 and Tyr-198, which activates the enzyme (By similarity). Dephosphorylated by DSPTP1B/MKP2.</text>
</comment>
<comment type="similarity">
    <text evidence="3 30">Belongs to the protein kinase superfamily. CMGC Ser/Thr protein kinase family. MAP kinase subfamily.</text>
</comment>
<gene>
    <name evidence="29" type="primary">MPK3</name>
    <name evidence="31" type="ordered locus">At3g45640</name>
    <name evidence="33" type="ORF">F9K21.220</name>
    <name evidence="32" type="ORF">T6D9.4</name>
</gene>
<feature type="chain" id="PRO_0000186312" description="Mitogen-activated protein kinase 3">
    <location>
        <begin position="1"/>
        <end position="370"/>
    </location>
</feature>
<feature type="domain" description="Protein kinase" evidence="3">
    <location>
        <begin position="38"/>
        <end position="324"/>
    </location>
</feature>
<feature type="short sequence motif" description="TXY">
    <location>
        <begin position="196"/>
        <end position="198"/>
    </location>
</feature>
<feature type="active site" description="Proton acceptor" evidence="3 4">
    <location>
        <position position="164"/>
    </location>
</feature>
<feature type="binding site" evidence="3">
    <location>
        <begin position="44"/>
        <end position="52"/>
    </location>
    <ligand>
        <name>ATP</name>
        <dbReference type="ChEBI" id="CHEBI:30616"/>
    </ligand>
</feature>
<feature type="binding site" evidence="3">
    <location>
        <position position="67"/>
    </location>
    <ligand>
        <name>ATP</name>
        <dbReference type="ChEBI" id="CHEBI:30616"/>
    </ligand>
</feature>
<feature type="modified residue" description="Phosphothreonine" evidence="2">
    <location>
        <position position="196"/>
    </location>
</feature>
<feature type="modified residue" description="Phosphotyrosine" evidence="2">
    <location>
        <position position="198"/>
    </location>
</feature>
<feature type="modified residue" description="Phosphothreonine" evidence="2">
    <location>
        <position position="201"/>
    </location>
</feature>
<feature type="sequence conflict" description="In Ref. 1; BAA04866." evidence="30" ref="1">
    <original>E</original>
    <variation>D</variation>
    <location>
        <position position="15"/>
    </location>
</feature>
<sequence length="370" mass="42717">MNTGGGQYTDFPAVETHGGQFISYDIFGSLFEITSKYRPPIIPIGRGAYGIVCSVLDTETNELVAMKKIANAFDNHMDAKRTLREIKLLRHLDHENIIAIRDVVPPPLRRQFSDVYISTELMDTDLHQIIRSNQSLSEEHCQYFLYQLLRGLKYIHSANIIHRDLKPSNLLLNANCDLKICDFGLARPTSENDFMTEYVVTRWYRAPELLLNSSDYTAAIDVWSVGCIFMELMNRKPLFPGKDHVHQMRLLTELLGTPTESDLGFTHNEDAKRYIRQLPNFPRQPLAKLFSHVNPMAIDLVDRMLTFDPNRRITVEQALNHQYLAKLHDPNDEPICQKPFSFEFEQQPLDEEQIKEMIYQEAIALNPTYG</sequence>
<protein>
    <recommendedName>
        <fullName evidence="29">Mitogen-activated protein kinase 3</fullName>
        <shortName evidence="29">AtMPK3</shortName>
        <shortName evidence="29">MAP kinase 3</shortName>
        <ecNumber evidence="3 8 10">2.7.11.24</ecNumber>
    </recommendedName>
</protein>
<dbReference type="EC" id="2.7.11.24" evidence="3 8 10"/>
<dbReference type="EMBL" id="D21839">
    <property type="protein sequence ID" value="BAA04866.1"/>
    <property type="molecule type" value="mRNA"/>
</dbReference>
<dbReference type="EMBL" id="AL138657">
    <property type="protein sequence ID" value="CAB75493.1"/>
    <property type="molecule type" value="Genomic_DNA"/>
</dbReference>
<dbReference type="EMBL" id="AL157735">
    <property type="status" value="NOT_ANNOTATED_CDS"/>
    <property type="molecule type" value="Genomic_DNA"/>
</dbReference>
<dbReference type="EMBL" id="CP002686">
    <property type="protein sequence ID" value="AEE78054.1"/>
    <property type="molecule type" value="Genomic_DNA"/>
</dbReference>
<dbReference type="EMBL" id="AF386961">
    <property type="protein sequence ID" value="AAK62406.1"/>
    <property type="molecule type" value="mRNA"/>
</dbReference>
<dbReference type="EMBL" id="BT000007">
    <property type="protein sequence ID" value="AAN15326.1"/>
    <property type="molecule type" value="mRNA"/>
</dbReference>
<dbReference type="PIR" id="S40469">
    <property type="entry name" value="S40469"/>
</dbReference>
<dbReference type="PIR" id="T47504">
    <property type="entry name" value="T47504"/>
</dbReference>
<dbReference type="RefSeq" id="NP_190150.1">
    <property type="nucleotide sequence ID" value="NM_114433.3"/>
</dbReference>
<dbReference type="SMR" id="Q39023"/>
<dbReference type="BioGRID" id="9026">
    <property type="interactions" value="177"/>
</dbReference>
<dbReference type="DIP" id="DIP-768N"/>
<dbReference type="ELM" id="Q39023"/>
<dbReference type="FunCoup" id="Q39023">
    <property type="interactions" value="2948"/>
</dbReference>
<dbReference type="IntAct" id="Q39023">
    <property type="interactions" value="21"/>
</dbReference>
<dbReference type="MINT" id="Q39023"/>
<dbReference type="STRING" id="3702.Q39023"/>
<dbReference type="iPTMnet" id="Q39023"/>
<dbReference type="PaxDb" id="3702-AT3G45640.1"/>
<dbReference type="ProteomicsDB" id="238272"/>
<dbReference type="EnsemblPlants" id="AT3G45640.1">
    <property type="protein sequence ID" value="AT3G45640.1"/>
    <property type="gene ID" value="AT3G45640"/>
</dbReference>
<dbReference type="GeneID" id="823706"/>
<dbReference type="Gramene" id="AT3G45640.1">
    <property type="protein sequence ID" value="AT3G45640.1"/>
    <property type="gene ID" value="AT3G45640"/>
</dbReference>
<dbReference type="KEGG" id="ath:AT3G45640"/>
<dbReference type="Araport" id="AT3G45640"/>
<dbReference type="TAIR" id="AT3G45640">
    <property type="gene designation" value="MPK3"/>
</dbReference>
<dbReference type="eggNOG" id="KOG0660">
    <property type="taxonomic scope" value="Eukaryota"/>
</dbReference>
<dbReference type="HOGENOM" id="CLU_000288_181_1_1"/>
<dbReference type="InParanoid" id="Q39023"/>
<dbReference type="OMA" id="MDIPRPE"/>
<dbReference type="OrthoDB" id="192887at2759"/>
<dbReference type="PhylomeDB" id="Q39023"/>
<dbReference type="BRENDA" id="2.7.11.24">
    <property type="organism ID" value="399"/>
</dbReference>
<dbReference type="PRO" id="PR:Q39023"/>
<dbReference type="Proteomes" id="UP000006548">
    <property type="component" value="Chromosome 3"/>
</dbReference>
<dbReference type="ExpressionAtlas" id="Q39023">
    <property type="expression patterns" value="baseline and differential"/>
</dbReference>
<dbReference type="GO" id="GO:0005938">
    <property type="term" value="C:cell cortex"/>
    <property type="evidence" value="ECO:0000314"/>
    <property type="project" value="UniProtKB"/>
</dbReference>
<dbReference type="GO" id="GO:0005634">
    <property type="term" value="C:nucleus"/>
    <property type="evidence" value="ECO:0007669"/>
    <property type="project" value="UniProtKB-SubCell"/>
</dbReference>
<dbReference type="GO" id="GO:0005524">
    <property type="term" value="F:ATP binding"/>
    <property type="evidence" value="ECO:0007669"/>
    <property type="project" value="UniProtKB-KW"/>
</dbReference>
<dbReference type="GO" id="GO:0004707">
    <property type="term" value="F:MAP kinase activity"/>
    <property type="evidence" value="ECO:0007669"/>
    <property type="project" value="UniProtKB-EC"/>
</dbReference>
<dbReference type="GO" id="GO:0004672">
    <property type="term" value="F:protein kinase activity"/>
    <property type="evidence" value="ECO:0000314"/>
    <property type="project" value="TAIR"/>
</dbReference>
<dbReference type="GO" id="GO:0106310">
    <property type="term" value="F:protein serine kinase activity"/>
    <property type="evidence" value="ECO:0007669"/>
    <property type="project" value="RHEA"/>
</dbReference>
<dbReference type="GO" id="GO:0009738">
    <property type="term" value="P:abscisic acid-activated signaling pathway"/>
    <property type="evidence" value="ECO:0000304"/>
    <property type="project" value="TAIR"/>
</dbReference>
<dbReference type="GO" id="GO:0010120">
    <property type="term" value="P:camalexin biosynthetic process"/>
    <property type="evidence" value="ECO:0000315"/>
    <property type="project" value="TAIR"/>
</dbReference>
<dbReference type="GO" id="GO:0010229">
    <property type="term" value="P:inflorescence development"/>
    <property type="evidence" value="ECO:0000316"/>
    <property type="project" value="TAIR"/>
</dbReference>
<dbReference type="GO" id="GO:0048481">
    <property type="term" value="P:plant ovule development"/>
    <property type="evidence" value="ECO:0000316"/>
    <property type="project" value="TAIR"/>
</dbReference>
<dbReference type="GO" id="GO:0009626">
    <property type="term" value="P:plant-type hypersensitive response"/>
    <property type="evidence" value="ECO:0007669"/>
    <property type="project" value="UniProtKB-KW"/>
</dbReference>
<dbReference type="GO" id="GO:0009555">
    <property type="term" value="P:pollen development"/>
    <property type="evidence" value="ECO:0000316"/>
    <property type="project" value="TAIR"/>
</dbReference>
<dbReference type="GO" id="GO:0010183">
    <property type="term" value="P:pollen tube guidance"/>
    <property type="evidence" value="ECO:0000316"/>
    <property type="project" value="TAIR"/>
</dbReference>
<dbReference type="GO" id="GO:0009875">
    <property type="term" value="P:pollen-pistil interaction"/>
    <property type="evidence" value="ECO:0000316"/>
    <property type="project" value="TAIR"/>
</dbReference>
<dbReference type="GO" id="GO:0080136">
    <property type="term" value="P:priming of cellular response to stress"/>
    <property type="evidence" value="ECO:0000315"/>
    <property type="project" value="TAIR"/>
</dbReference>
<dbReference type="GO" id="GO:0006468">
    <property type="term" value="P:protein phosphorylation"/>
    <property type="evidence" value="ECO:0000314"/>
    <property type="project" value="TAIR"/>
</dbReference>
<dbReference type="GO" id="GO:0009617">
    <property type="term" value="P:response to bacterium"/>
    <property type="evidence" value="ECO:0000270"/>
    <property type="project" value="TAIR"/>
</dbReference>
<dbReference type="GO" id="GO:0010200">
    <property type="term" value="P:response to chitin"/>
    <property type="evidence" value="ECO:0000270"/>
    <property type="project" value="TAIR"/>
</dbReference>
<dbReference type="GO" id="GO:0009409">
    <property type="term" value="P:response to cold"/>
    <property type="evidence" value="ECO:0000270"/>
    <property type="project" value="TAIR"/>
</dbReference>
<dbReference type="GO" id="GO:0050826">
    <property type="term" value="P:response to freezing"/>
    <property type="evidence" value="ECO:0000315"/>
    <property type="project" value="TAIR"/>
</dbReference>
<dbReference type="GO" id="GO:1902065">
    <property type="term" value="P:response to L-glutamate"/>
    <property type="evidence" value="ECO:0000314"/>
    <property type="project" value="TAIR"/>
</dbReference>
<dbReference type="GO" id="GO:0006970">
    <property type="term" value="P:response to osmotic stress"/>
    <property type="evidence" value="ECO:0000314"/>
    <property type="project" value="TAIR"/>
</dbReference>
<dbReference type="GO" id="GO:0006979">
    <property type="term" value="P:response to oxidative stress"/>
    <property type="evidence" value="ECO:0000270"/>
    <property type="project" value="TAIR"/>
</dbReference>
<dbReference type="GO" id="GO:0010224">
    <property type="term" value="P:response to UV-B"/>
    <property type="evidence" value="ECO:0000315"/>
    <property type="project" value="TAIR"/>
</dbReference>
<dbReference type="GO" id="GO:0009611">
    <property type="term" value="P:response to wounding"/>
    <property type="evidence" value="ECO:0000270"/>
    <property type="project" value="TAIR"/>
</dbReference>
<dbReference type="CDD" id="cd07858">
    <property type="entry name" value="STKc_TEY_MAPK"/>
    <property type="match status" value="1"/>
</dbReference>
<dbReference type="FunFam" id="1.10.510.10:FF:000013">
    <property type="entry name" value="Mitogen-activated protein kinase"/>
    <property type="match status" value="1"/>
</dbReference>
<dbReference type="FunFam" id="3.30.200.20:FF:000046">
    <property type="entry name" value="Mitogen-activated protein kinase"/>
    <property type="match status" value="1"/>
</dbReference>
<dbReference type="Gene3D" id="3.30.200.20">
    <property type="entry name" value="Phosphorylase Kinase, domain 1"/>
    <property type="match status" value="1"/>
</dbReference>
<dbReference type="Gene3D" id="1.10.510.10">
    <property type="entry name" value="Transferase(Phosphotransferase) domain 1"/>
    <property type="match status" value="1"/>
</dbReference>
<dbReference type="InterPro" id="IPR011009">
    <property type="entry name" value="Kinase-like_dom_sf"/>
</dbReference>
<dbReference type="InterPro" id="IPR050117">
    <property type="entry name" value="MAP_kinase"/>
</dbReference>
<dbReference type="InterPro" id="IPR003527">
    <property type="entry name" value="MAP_kinase_CS"/>
</dbReference>
<dbReference type="InterPro" id="IPR000719">
    <property type="entry name" value="Prot_kinase_dom"/>
</dbReference>
<dbReference type="InterPro" id="IPR017441">
    <property type="entry name" value="Protein_kinase_ATP_BS"/>
</dbReference>
<dbReference type="InterPro" id="IPR008271">
    <property type="entry name" value="Ser/Thr_kinase_AS"/>
</dbReference>
<dbReference type="PANTHER" id="PTHR24055">
    <property type="entry name" value="MITOGEN-ACTIVATED PROTEIN KINASE"/>
    <property type="match status" value="1"/>
</dbReference>
<dbReference type="Pfam" id="PF00069">
    <property type="entry name" value="Pkinase"/>
    <property type="match status" value="1"/>
</dbReference>
<dbReference type="SMART" id="SM00220">
    <property type="entry name" value="S_TKc"/>
    <property type="match status" value="1"/>
</dbReference>
<dbReference type="SUPFAM" id="SSF56112">
    <property type="entry name" value="Protein kinase-like (PK-like)"/>
    <property type="match status" value="1"/>
</dbReference>
<dbReference type="PROSITE" id="PS01351">
    <property type="entry name" value="MAPK"/>
    <property type="match status" value="1"/>
</dbReference>
<dbReference type="PROSITE" id="PS00107">
    <property type="entry name" value="PROTEIN_KINASE_ATP"/>
    <property type="match status" value="1"/>
</dbReference>
<dbReference type="PROSITE" id="PS50011">
    <property type="entry name" value="PROTEIN_KINASE_DOM"/>
    <property type="match status" value="1"/>
</dbReference>
<dbReference type="PROSITE" id="PS00108">
    <property type="entry name" value="PROTEIN_KINASE_ST"/>
    <property type="match status" value="1"/>
</dbReference>
<keyword id="KW-0067">ATP-binding</keyword>
<keyword id="KW-0963">Cytoplasm</keyword>
<keyword id="KW-0381">Hypersensitive response</keyword>
<keyword id="KW-0418">Kinase</keyword>
<keyword id="KW-0547">Nucleotide-binding</keyword>
<keyword id="KW-0539">Nucleus</keyword>
<keyword id="KW-0597">Phosphoprotein</keyword>
<keyword id="KW-0611">Plant defense</keyword>
<keyword id="KW-1185">Reference proteome</keyword>
<keyword id="KW-0723">Serine/threonine-protein kinase</keyword>
<keyword id="KW-0346">Stress response</keyword>
<keyword id="KW-0808">Transferase</keyword>
<accession>Q39023</accession>
<accession>Q9M1E3</accession>
<proteinExistence type="evidence at protein level"/>
<organism>
    <name type="scientific">Arabidopsis thaliana</name>
    <name type="common">Mouse-ear cress</name>
    <dbReference type="NCBI Taxonomy" id="3702"/>
    <lineage>
        <taxon>Eukaryota</taxon>
        <taxon>Viridiplantae</taxon>
        <taxon>Streptophyta</taxon>
        <taxon>Embryophyta</taxon>
        <taxon>Tracheophyta</taxon>
        <taxon>Spermatophyta</taxon>
        <taxon>Magnoliopsida</taxon>
        <taxon>eudicotyledons</taxon>
        <taxon>Gunneridae</taxon>
        <taxon>Pentapetalae</taxon>
        <taxon>rosids</taxon>
        <taxon>malvids</taxon>
        <taxon>Brassicales</taxon>
        <taxon>Brassicaceae</taxon>
        <taxon>Camelineae</taxon>
        <taxon>Arabidopsis</taxon>
    </lineage>
</organism>
<reference key="1">
    <citation type="journal article" date="1993" name="FEBS Lett.">
        <title>ATMPKs: a gene family of plant MAP kinases in Arabidopsis thaliana.</title>
        <authorList>
            <person name="Mizoguchi T."/>
            <person name="Hayashida N."/>
            <person name="Yamaguchi-Shinozaki K."/>
            <person name="Kamada H."/>
            <person name="Shinozaki K."/>
        </authorList>
    </citation>
    <scope>NUCLEOTIDE SEQUENCE [MRNA]</scope>
    <source>
        <strain>cv. Columbia</strain>
    </source>
</reference>
<reference key="2">
    <citation type="journal article" date="2000" name="Nature">
        <title>Sequence and analysis of chromosome 3 of the plant Arabidopsis thaliana.</title>
        <authorList>
            <person name="Salanoubat M."/>
            <person name="Lemcke K."/>
            <person name="Rieger M."/>
            <person name="Ansorge W."/>
            <person name="Unseld M."/>
            <person name="Fartmann B."/>
            <person name="Valle G."/>
            <person name="Bloecker H."/>
            <person name="Perez-Alonso M."/>
            <person name="Obermaier B."/>
            <person name="Delseny M."/>
            <person name="Boutry M."/>
            <person name="Grivell L.A."/>
            <person name="Mache R."/>
            <person name="Puigdomenech P."/>
            <person name="De Simone V."/>
            <person name="Choisne N."/>
            <person name="Artiguenave F."/>
            <person name="Robert C."/>
            <person name="Brottier P."/>
            <person name="Wincker P."/>
            <person name="Cattolico L."/>
            <person name="Weissenbach J."/>
            <person name="Saurin W."/>
            <person name="Quetier F."/>
            <person name="Schaefer M."/>
            <person name="Mueller-Auer S."/>
            <person name="Gabel C."/>
            <person name="Fuchs M."/>
            <person name="Benes V."/>
            <person name="Wurmbach E."/>
            <person name="Drzonek H."/>
            <person name="Erfle H."/>
            <person name="Jordan N."/>
            <person name="Bangert S."/>
            <person name="Wiedelmann R."/>
            <person name="Kranz H."/>
            <person name="Voss H."/>
            <person name="Holland R."/>
            <person name="Brandt P."/>
            <person name="Nyakatura G."/>
            <person name="Vezzi A."/>
            <person name="D'Angelo M."/>
            <person name="Pallavicini A."/>
            <person name="Toppo S."/>
            <person name="Simionati B."/>
            <person name="Conrad A."/>
            <person name="Hornischer K."/>
            <person name="Kauer G."/>
            <person name="Loehnert T.-H."/>
            <person name="Nordsiek G."/>
            <person name="Reichelt J."/>
            <person name="Scharfe M."/>
            <person name="Schoen O."/>
            <person name="Bargues M."/>
            <person name="Terol J."/>
            <person name="Climent J."/>
            <person name="Navarro P."/>
            <person name="Collado C."/>
            <person name="Perez-Perez A."/>
            <person name="Ottenwaelder B."/>
            <person name="Duchemin D."/>
            <person name="Cooke R."/>
            <person name="Laudie M."/>
            <person name="Berger-Llauro C."/>
            <person name="Purnelle B."/>
            <person name="Masuy D."/>
            <person name="de Haan M."/>
            <person name="Maarse A.C."/>
            <person name="Alcaraz J.-P."/>
            <person name="Cottet A."/>
            <person name="Casacuberta E."/>
            <person name="Monfort A."/>
            <person name="Argiriou A."/>
            <person name="Flores M."/>
            <person name="Liguori R."/>
            <person name="Vitale D."/>
            <person name="Mannhaupt G."/>
            <person name="Haase D."/>
            <person name="Schoof H."/>
            <person name="Rudd S."/>
            <person name="Zaccaria P."/>
            <person name="Mewes H.-W."/>
            <person name="Mayer K.F.X."/>
            <person name="Kaul S."/>
            <person name="Town C.D."/>
            <person name="Koo H.L."/>
            <person name="Tallon L.J."/>
            <person name="Jenkins J."/>
            <person name="Rooney T."/>
            <person name="Rizzo M."/>
            <person name="Walts A."/>
            <person name="Utterback T."/>
            <person name="Fujii C.Y."/>
            <person name="Shea T.P."/>
            <person name="Creasy T.H."/>
            <person name="Haas B."/>
            <person name="Maiti R."/>
            <person name="Wu D."/>
            <person name="Peterson J."/>
            <person name="Van Aken S."/>
            <person name="Pai G."/>
            <person name="Militscher J."/>
            <person name="Sellers P."/>
            <person name="Gill J.E."/>
            <person name="Feldblyum T.V."/>
            <person name="Preuss D."/>
            <person name="Lin X."/>
            <person name="Nierman W.C."/>
            <person name="Salzberg S.L."/>
            <person name="White O."/>
            <person name="Venter J.C."/>
            <person name="Fraser C.M."/>
            <person name="Kaneko T."/>
            <person name="Nakamura Y."/>
            <person name="Sato S."/>
            <person name="Kato T."/>
            <person name="Asamizu E."/>
            <person name="Sasamoto S."/>
            <person name="Kimura T."/>
            <person name="Idesawa K."/>
            <person name="Kawashima K."/>
            <person name="Kishida Y."/>
            <person name="Kiyokawa C."/>
            <person name="Kohara M."/>
            <person name="Matsumoto M."/>
            <person name="Matsuno A."/>
            <person name="Muraki A."/>
            <person name="Nakayama S."/>
            <person name="Nakazaki N."/>
            <person name="Shinpo S."/>
            <person name="Takeuchi C."/>
            <person name="Wada T."/>
            <person name="Watanabe A."/>
            <person name="Yamada M."/>
            <person name="Yasuda M."/>
            <person name="Tabata S."/>
        </authorList>
    </citation>
    <scope>NUCLEOTIDE SEQUENCE [LARGE SCALE GENOMIC DNA]</scope>
    <source>
        <strain>cv. Columbia</strain>
    </source>
</reference>
<reference key="3">
    <citation type="journal article" date="2017" name="Plant J.">
        <title>Araport11: a complete reannotation of the Arabidopsis thaliana reference genome.</title>
        <authorList>
            <person name="Cheng C.Y."/>
            <person name="Krishnakumar V."/>
            <person name="Chan A.P."/>
            <person name="Thibaud-Nissen F."/>
            <person name="Schobel S."/>
            <person name="Town C.D."/>
        </authorList>
    </citation>
    <scope>GENOME REANNOTATION</scope>
    <source>
        <strain>cv. Columbia</strain>
    </source>
</reference>
<reference key="4">
    <citation type="journal article" date="2003" name="Science">
        <title>Empirical analysis of transcriptional activity in the Arabidopsis genome.</title>
        <authorList>
            <person name="Yamada K."/>
            <person name="Lim J."/>
            <person name="Dale J.M."/>
            <person name="Chen H."/>
            <person name="Shinn P."/>
            <person name="Palm C.J."/>
            <person name="Southwick A.M."/>
            <person name="Wu H.C."/>
            <person name="Kim C.J."/>
            <person name="Nguyen M."/>
            <person name="Pham P.K."/>
            <person name="Cheuk R.F."/>
            <person name="Karlin-Newmann G."/>
            <person name="Liu S.X."/>
            <person name="Lam B."/>
            <person name="Sakano H."/>
            <person name="Wu T."/>
            <person name="Yu G."/>
            <person name="Miranda M."/>
            <person name="Quach H.L."/>
            <person name="Tripp M."/>
            <person name="Chang C.H."/>
            <person name="Lee J.M."/>
            <person name="Toriumi M.J."/>
            <person name="Chan M.M."/>
            <person name="Tang C.C."/>
            <person name="Onodera C.S."/>
            <person name="Deng J.M."/>
            <person name="Akiyama K."/>
            <person name="Ansari Y."/>
            <person name="Arakawa T."/>
            <person name="Banh J."/>
            <person name="Banno F."/>
            <person name="Bowser L."/>
            <person name="Brooks S.Y."/>
            <person name="Carninci P."/>
            <person name="Chao Q."/>
            <person name="Choy N."/>
            <person name="Enju A."/>
            <person name="Goldsmith A.D."/>
            <person name="Gurjal M."/>
            <person name="Hansen N.F."/>
            <person name="Hayashizaki Y."/>
            <person name="Johnson-Hopson C."/>
            <person name="Hsuan V.W."/>
            <person name="Iida K."/>
            <person name="Karnes M."/>
            <person name="Khan S."/>
            <person name="Koesema E."/>
            <person name="Ishida J."/>
            <person name="Jiang P.X."/>
            <person name="Jones T."/>
            <person name="Kawai J."/>
            <person name="Kamiya A."/>
            <person name="Meyers C."/>
            <person name="Nakajima M."/>
            <person name="Narusaka M."/>
            <person name="Seki M."/>
            <person name="Sakurai T."/>
            <person name="Satou M."/>
            <person name="Tamse R."/>
            <person name="Vaysberg M."/>
            <person name="Wallender E.K."/>
            <person name="Wong C."/>
            <person name="Yamamura Y."/>
            <person name="Yuan S."/>
            <person name="Shinozaki K."/>
            <person name="Davis R.W."/>
            <person name="Theologis A."/>
            <person name="Ecker J.R."/>
        </authorList>
    </citation>
    <scope>NUCLEOTIDE SEQUENCE [LARGE SCALE MRNA]</scope>
    <source>
        <strain>cv. Columbia</strain>
    </source>
</reference>
<reference key="5">
    <citation type="journal article" date="1996" name="Proc. Natl. Acad. Sci. U.S.A.">
        <title>A gene encoding a mitogen-activated protein kinase kinase kinase is induced simultaneously with genes for a mitogen-activated protein kinase and an S6 ribosomal protein kinase by touch, cold, and water stress in Arabidopsis thaliana.</title>
        <authorList>
            <person name="Mizoguchi T."/>
            <person name="Irie K."/>
            <person name="Hirayama T."/>
            <person name="Hayashida N."/>
            <person name="Yamaguchi-Shinozaki K."/>
            <person name="Matsumoto K."/>
            <person name="Shinozaki K."/>
        </authorList>
    </citation>
    <scope>INDUCTION</scope>
</reference>
<reference key="6">
    <citation type="journal article" date="2000" name="Proc. Natl. Acad. Sci. U.S.A.">
        <title>Functional analysis of oxidative stress-activated mitogen-activated protein kinase cascade in plants.</title>
        <authorList>
            <person name="Kovtun Y."/>
            <person name="Chiu W.-L."/>
            <person name="Tena G."/>
            <person name="Sheen J."/>
        </authorList>
    </citation>
    <scope>ACTIVITY REGULATION</scope>
</reference>
<reference key="7">
    <citation type="journal article" date="2002" name="FEBS Lett.">
        <title>Different protein kinase families are activated by osmotic stresses in Arabidopsis thaliana cell suspensions. Involvement of the MAP kinases AtMPK3 and AtMPK6.</title>
        <authorList>
            <person name="Droillard M.-J."/>
            <person name="Boudsocq M."/>
            <person name="Barbier-Brygoo H."/>
            <person name="Lauriere C."/>
        </authorList>
    </citation>
    <scope>ACTIVITY REGULATION</scope>
    <scope>CATALYTIC ACTIVITY</scope>
</reference>
<reference key="8">
    <citation type="journal article" date="2002" name="Plant J.">
        <title>Activation of AtMEK1, an Arabidopsis mitogen-activated protein kinase kinase, in vitro and in vivo: analysis of active mutants expressed in E. coli and generation of the active form in stress response in seedlings.</title>
        <authorList>
            <person name="Matsuoka D."/>
            <person name="Nanmori T."/>
            <person name="Sato K."/>
            <person name="Fukami Y."/>
            <person name="Kikkawa U."/>
            <person name="Yasuda T."/>
        </authorList>
    </citation>
    <scope>PHOSPHORYLATION</scope>
</reference>
<reference key="9">
    <citation type="journal article" date="2002" name="Nature">
        <title>MAP kinase signalling cascade in Arabidopsis innate immunity.</title>
        <authorList>
            <person name="Asai T."/>
            <person name="Tena G."/>
            <person name="Plotnikova J."/>
            <person name="Willmann M.R."/>
            <person name="Chiu W.-L."/>
            <person name="Gomez-Gomez L."/>
            <person name="Boller T."/>
            <person name="Ausubel F.M."/>
            <person name="Sheen J."/>
        </authorList>
    </citation>
    <scope>FUNCTION</scope>
    <scope>ACTIVITY REGULATION</scope>
</reference>
<reference key="10">
    <citation type="journal article" date="2002" name="Trends Plant Sci.">
        <title>Mitogen-activated protein kinase cascades in plants: a new nomenclature.</title>
        <authorList>
            <consortium name="MAPK group"/>
        </authorList>
    </citation>
    <scope>GENE FAMILY</scope>
    <scope>NOMENCLATURE</scope>
</reference>
<reference key="11">
    <citation type="journal article" date="2003" name="Proc. Natl. Acad. Sci. U.S.A.">
        <title>NDP kinase 2 interacts with two oxidative stress-activated MAPKs to regulate cellular redox state and enhances multiple stress tolerance in transgenic plants.</title>
        <authorList>
            <person name="Moon H."/>
            <person name="Lee B."/>
            <person name="Choi G."/>
            <person name="Shin D."/>
            <person name="Prasad D.T."/>
            <person name="Lee O."/>
            <person name="Kwak S.-S."/>
            <person name="Kim D.H."/>
            <person name="Nam J."/>
            <person name="Bahk J."/>
            <person name="Hong J.C."/>
            <person name="Lee S.Y."/>
            <person name="Cho M.J."/>
            <person name="Lim C.O."/>
            <person name="Yun D.-J."/>
        </authorList>
    </citation>
    <scope>INTERACTION WITH NDPK2</scope>
</reference>
<reference key="12">
    <citation type="journal article" date="2004" name="Plant J.">
        <title>Stress hormone-independent activation and nuclear translocation of mitogen-activated protein kinases in Arabidopsis thaliana during ozone exposure.</title>
        <authorList>
            <person name="Ahlfors R."/>
            <person name="Macioszek V."/>
            <person name="Rudd J."/>
            <person name="Brosche M."/>
            <person name="Schlichting R."/>
            <person name="Scheel D."/>
            <person name="Kangasjarvi J."/>
        </authorList>
    </citation>
    <scope>ACTIVITY REGULATION</scope>
    <scope>SUBCELLULAR LOCATION</scope>
    <scope>INDUCTION</scope>
    <scope>CATALYTIC ACTIVITY</scope>
</reference>
<reference key="13">
    <citation type="journal article" date="2005" name="Environ. Pollut.">
        <title>RNA interference-based (RNAi) suppression of AtMPK6, an Arabidopsis mitogen-activated protein kinase, results in hypersensitivity to ozone and misregulation of AtMPK3.</title>
        <authorList>
            <person name="Miles G.P."/>
            <person name="Samuel M.A."/>
            <person name="Zhang Y."/>
            <person name="Ellis B.E."/>
        </authorList>
    </citation>
    <scope>FUNCTION</scope>
</reference>
<reference key="14">
    <citation type="journal article" date="2006" name="Trends Plant Sci.">
        <title>Ancient signals: comparative genomics of plant MAPK and MAPKK gene families.</title>
        <authorList>
            <person name="Hamel L.P."/>
            <person name="Nicole M.C."/>
            <person name="Sritubtim S."/>
            <person name="Morency M.J."/>
            <person name="Ellis M."/>
            <person name="Ehlting J."/>
            <person name="Beaudoin N."/>
            <person name="Barbazuk B."/>
            <person name="Klessig D."/>
            <person name="Lee J."/>
            <person name="Martin G."/>
            <person name="Mundy J."/>
            <person name="Ohashi Y."/>
            <person name="Scheel D."/>
            <person name="Sheen J."/>
            <person name="Xing T."/>
            <person name="Zhang S."/>
            <person name="Seguin A."/>
            <person name="Ellis B.E."/>
        </authorList>
    </citation>
    <scope>GENE FAMILY</scope>
</reference>
<reference key="15">
    <citation type="journal article" date="2007" name="J. Biol. Chem.">
        <title>Arabidopsis MAPK phosphatase 2 (MKP2) positively regulates oxidative stress tolerance and inactivates the MPK3 and MPK6 MAPKs.</title>
        <authorList>
            <person name="Lee J.S."/>
            <person name="Ellis B.E."/>
        </authorList>
    </citation>
    <scope>ACTIVITY REGULATION</scope>
    <scope>DEPHOSPHORYLATION</scope>
</reference>
<reference key="16">
    <citation type="journal article" date="2007" name="Plant Cell">
        <title>Stomatal development and patterning are regulated by environmentally responsive mitogen-activated protein kinases in Arabidopsis.</title>
        <authorList>
            <person name="Wang H."/>
            <person name="Ngwenyama N."/>
            <person name="Liu Y."/>
            <person name="Walker J.C."/>
            <person name="Zhang S."/>
        </authorList>
    </citation>
    <scope>FUNCTION</scope>
</reference>
<reference key="17">
    <citation type="journal article" date="2007" name="Science">
        <title>Trojan horse strategy in Agrobacterium transformation: abusing MAPK defense signaling.</title>
        <authorList>
            <person name="Djamei A."/>
            <person name="Pitzschke A."/>
            <person name="Nakagami H."/>
            <person name="Rajh I."/>
            <person name="Hirt H."/>
        </authorList>
    </citation>
    <scope>FUNCTION</scope>
    <scope>ACTIVITY REGULATION</scope>
    <scope>INTERACTION WITH VIP1</scope>
</reference>
<reference key="18">
    <citation type="journal article" date="2008" name="Nature">
        <title>Dual control of nuclear EIN3 by bifurcate MAPK cascades in C2H4 signalling.</title>
        <authorList>
            <person name="Yoo S.D."/>
            <person name="Cho Y.H."/>
            <person name="Tena G."/>
            <person name="Xiong Y."/>
            <person name="Sheen J."/>
        </authorList>
    </citation>
    <scope>FUNCTION</scope>
    <scope>ACTIVITY REGULATION</scope>
</reference>
<reference key="19">
    <citation type="journal article" date="2008" name="Proc. Natl. Acad. Sci. U.S.A.">
        <title>A fungal-responsive MAPK cascade regulates phytoalexin biosynthesis in Arabidopsis.</title>
        <authorList>
            <person name="Ren D."/>
            <person name="Liu Y."/>
            <person name="Yang K.Y."/>
            <person name="Han L."/>
            <person name="Mao G."/>
            <person name="Glazebrook J."/>
            <person name="Zhang S."/>
        </authorList>
    </citation>
    <scope>FUNCTION</scope>
</reference>
<reference key="20">
    <citation type="journal article" date="2010" name="Plant J.">
        <title>MAPK phosphatase MKP2 mediates disease responses in Arabidopsis and functionally interacts with MPK3 and MPK6.</title>
        <authorList>
            <person name="Lumbreras V."/>
            <person name="Vilela B."/>
            <person name="Irar S."/>
            <person name="Sole M."/>
            <person name="Capellades M."/>
            <person name="Valls M."/>
            <person name="Coca M."/>
            <person name="Pages M."/>
        </authorList>
    </citation>
    <scope>INTERACTION WITH DSPTP1B/MKP2</scope>
</reference>
<reference key="21">
    <citation type="journal article" date="2011" name="Biochem. Biophys. Res. Commun.">
        <title>Arabidopsis MKK4 mediates osmotic-stress response via its regulation of MPK3 activity.</title>
        <authorList>
            <person name="Kim S.H."/>
            <person name="Woo D.H."/>
            <person name="Kim J.M."/>
            <person name="Lee S.Y."/>
            <person name="Chung W.S."/>
            <person name="Moon Y.H."/>
        </authorList>
    </citation>
    <scope>FUNCTION</scope>
    <scope>ACTIVITY REGULATION</scope>
</reference>
<reference key="22">
    <citation type="journal article" date="2012" name="Plant Cell">
        <title>A MAPK cascade downstream of ERECTA receptor-like protein kinase regulates Arabidopsis inflorescence architecture by promoting localized cell proliferation.</title>
        <authorList>
            <person name="Meng X."/>
            <person name="Wang H."/>
            <person name="He Y."/>
            <person name="Liu Y."/>
            <person name="Walker J.C."/>
            <person name="Torii K.U."/>
            <person name="Zhang S."/>
        </authorList>
    </citation>
    <scope>FUNCTION</scope>
</reference>
<reference key="23">
    <citation type="journal article" date="2014" name="New Phytol.">
        <title>The Arabidopsis thaliana mitogen-activated protein kinases MPK3 and MPK6 target a subclass of 'VQ-motif'-containing proteins to regulate immune responses.</title>
        <authorList>
            <person name="Pecher P."/>
            <person name="Eschen-Lippold L."/>
            <person name="Herklotz S."/>
            <person name="Kuhle K."/>
            <person name="Naumann K."/>
            <person name="Bethke G."/>
            <person name="Uhrig J."/>
            <person name="Weyhe M."/>
            <person name="Scheel D."/>
            <person name="Lee J."/>
        </authorList>
    </citation>
    <scope>INTERACTION WITH VQ4</scope>
</reference>
<reference key="24">
    <citation type="journal article" date="2014" name="PLoS Pathog.">
        <title>Arabidopsis LIP5, a positive regulator of multivesicular body biogenesis, is a critical target of pathogen-responsive MAPK cascade in plant basal defense.</title>
        <authorList>
            <person name="Wang F."/>
            <person name="Shang Y."/>
            <person name="Fan B."/>
            <person name="Yu J.-Q."/>
            <person name="Chen Z."/>
        </authorList>
    </citation>
    <scope>FUNCTION</scope>
    <scope>INTERACTION WITH LIP5</scope>
    <source>
        <strain>cv. Columbia</strain>
    </source>
</reference>
<reference key="25">
    <citation type="journal article" date="2015" name="Dev. Cell">
        <title>The BASL polarity protein controls a MAPK signaling feedback loop in asymmetric cell division.</title>
        <authorList>
            <person name="Zhang Y."/>
            <person name="Wang P."/>
            <person name="Shao W."/>
            <person name="Zhu J.-K."/>
            <person name="Dong J."/>
        </authorList>
    </citation>
    <scope>FUNCTION</scope>
    <scope>SUBCELLULAR LOCATION</scope>
    <source>
        <strain>cv. Columbia</strain>
    </source>
</reference>
<reference key="26">
    <citation type="journal article" date="2015" name="Nature">
        <title>Pathogen-secreted proteases activate a novel plant immune pathway.</title>
        <authorList>
            <person name="Cheng Z."/>
            <person name="Li J.F."/>
            <person name="Niu Y."/>
            <person name="Zhang X.C."/>
            <person name="Woody O.Z."/>
            <person name="Xiong Y."/>
            <person name="Djonovic S."/>
            <person name="Millet Y."/>
            <person name="Bush J."/>
            <person name="McConkey B.J."/>
            <person name="Sheen J."/>
            <person name="Ausubel F.M."/>
        </authorList>
    </citation>
    <scope>INTERACTION WITH RACK1A; RACK1B AND RACK1C</scope>
</reference>
<reference key="27">
    <citation type="journal article" date="2016" name="Curr. Biol.">
        <title>Phosphorylation of the polarity protein BASL differentiates asymmetric cell fate through MAPKs and SPCH.</title>
        <authorList>
            <person name="Zhang Y."/>
            <person name="Guo X."/>
            <person name="Dong J."/>
        </authorList>
    </citation>
    <scope>DEVELOPMENTAL STAGE</scope>
    <source>
        <strain>cv. Columbia</strain>
    </source>
</reference>
<reference key="28">
    <citation type="journal article" date="2016" name="Curr. Plant Biol.">
        <title>A protein-protein interaction network linking the energy-sensor kinase SnRK1 to multiple signaling pathways in Arabidopsis thaliana.</title>
        <authorList>
            <person name="Nietzsche M."/>
            <person name="Landgraf R."/>
            <person name="Tohge T."/>
            <person name="Boernke F."/>
        </authorList>
    </citation>
    <scope>INTERACTION WITH FLZ9</scope>
</reference>
<reference key="29">
    <citation type="journal article" date="2017" name="Plant Physiol.">
        <title>AIK1, a mitogen-activated protein kinase, modulates abscisic acid responses through the MKK5-MPK6 kinase cascade.</title>
        <authorList>
            <person name="Li K."/>
            <person name="Yang F."/>
            <person name="Zhang G."/>
            <person name="Song S."/>
            <person name="Li Y."/>
            <person name="Ren D."/>
            <person name="Miao Y."/>
            <person name="Song C.-P."/>
        </authorList>
    </citation>
    <scope>INTERACTION WITH MKK5</scope>
    <source>
        <strain>cv. Columbia</strain>
    </source>
</reference>
<reference key="30">
    <citation type="journal article" date="2018" name="Front. Plant Sci.">
        <title>Mitogen-activated protein kinase cascades in plant hormone signaling.</title>
        <authorList>
            <person name="Jagodzik P."/>
            <person name="Tajdel-Zielinska M."/>
            <person name="Ciesla A."/>
            <person name="Marczak M."/>
            <person name="Ludwikow A."/>
        </authorList>
    </citation>
    <scope>REVIEW ON MITOGEN-ACTIVATED PROTEIN KINASE CASCADES</scope>
</reference>
<reference key="31">
    <citation type="journal article" date="2019" name="Nat. Plants">
        <title>Bipartite anchoring of SCREAM enforces stomatal initiation by coupling MAP kinases to SPEECHLESS.</title>
        <authorList>
            <person name="Putarjunan A."/>
            <person name="Ruble J."/>
            <person name="Srivastava A."/>
            <person name="Zhao C."/>
            <person name="Rychel A.L."/>
            <person name="Hofstetter A.K."/>
            <person name="Tang X."/>
            <person name="Zhu J.K."/>
            <person name="Tama F."/>
            <person name="Zheng N."/>
            <person name="Torii K.U."/>
        </authorList>
    </citation>
    <scope>SUBCELLULAR LOCATION</scope>
</reference>
<name>MPK3_ARATH</name>
<evidence type="ECO:0000250" key="1"/>
<evidence type="ECO:0000250" key="2">
    <source>
        <dbReference type="UniProtKB" id="Q39026"/>
    </source>
</evidence>
<evidence type="ECO:0000255" key="3">
    <source>
        <dbReference type="PROSITE-ProRule" id="PRU00159"/>
    </source>
</evidence>
<evidence type="ECO:0000255" key="4">
    <source>
        <dbReference type="PROSITE-ProRule" id="PRU10027"/>
    </source>
</evidence>
<evidence type="ECO:0000269" key="5">
    <source>
    </source>
</evidence>
<evidence type="ECO:0000269" key="6">
    <source>
    </source>
</evidence>
<evidence type="ECO:0000269" key="7">
    <source>
    </source>
</evidence>
<evidence type="ECO:0000269" key="8">
    <source>
    </source>
</evidence>
<evidence type="ECO:0000269" key="9">
    <source>
    </source>
</evidence>
<evidence type="ECO:0000269" key="10">
    <source>
    </source>
</evidence>
<evidence type="ECO:0000269" key="11">
    <source>
    </source>
</evidence>
<evidence type="ECO:0000269" key="12">
    <source>
    </source>
</evidence>
<evidence type="ECO:0000269" key="13">
    <source>
    </source>
</evidence>
<evidence type="ECO:0000269" key="14">
    <source>
    </source>
</evidence>
<evidence type="ECO:0000269" key="15">
    <source>
    </source>
</evidence>
<evidence type="ECO:0000269" key="16">
    <source>
    </source>
</evidence>
<evidence type="ECO:0000269" key="17">
    <source>
    </source>
</evidence>
<evidence type="ECO:0000269" key="18">
    <source>
    </source>
</evidence>
<evidence type="ECO:0000269" key="19">
    <source>
    </source>
</evidence>
<evidence type="ECO:0000269" key="20">
    <source>
    </source>
</evidence>
<evidence type="ECO:0000269" key="21">
    <source>
    </source>
</evidence>
<evidence type="ECO:0000269" key="22">
    <source>
    </source>
</evidence>
<evidence type="ECO:0000269" key="23">
    <source>
    </source>
</evidence>
<evidence type="ECO:0000269" key="24">
    <source>
    </source>
</evidence>
<evidence type="ECO:0000269" key="25">
    <source>
    </source>
</evidence>
<evidence type="ECO:0000269" key="26">
    <source>
    </source>
</evidence>
<evidence type="ECO:0000269" key="27">
    <source>
    </source>
</evidence>
<evidence type="ECO:0000269" key="28">
    <source ref="28"/>
</evidence>
<evidence type="ECO:0000303" key="29">
    <source>
    </source>
</evidence>
<evidence type="ECO:0000305" key="30"/>
<evidence type="ECO:0000312" key="31">
    <source>
        <dbReference type="Araport" id="AT3G45640"/>
    </source>
</evidence>
<evidence type="ECO:0000312" key="32">
    <source>
        <dbReference type="EMBL" id="AL157735"/>
    </source>
</evidence>
<evidence type="ECO:0000312" key="33">
    <source>
        <dbReference type="EMBL" id="CAB75493.1"/>
    </source>
</evidence>